<protein>
    <recommendedName>
        <fullName evidence="1">Nicotinate-nucleotide--dimethylbenzimidazole phosphoribosyltransferase</fullName>
        <shortName evidence="1">NN:DBI PRT</shortName>
        <ecNumber evidence="1">2.4.2.21</ecNumber>
    </recommendedName>
    <alternativeName>
        <fullName evidence="1">N(1)-alpha-phosphoribosyltransferase</fullName>
    </alternativeName>
</protein>
<reference key="1">
    <citation type="submission" date="2007-05" db="EMBL/GenBank/DDBJ databases">
        <title>Complete sequence of Pseudomonas putida F1.</title>
        <authorList>
            <consortium name="US DOE Joint Genome Institute"/>
            <person name="Copeland A."/>
            <person name="Lucas S."/>
            <person name="Lapidus A."/>
            <person name="Barry K."/>
            <person name="Detter J.C."/>
            <person name="Glavina del Rio T."/>
            <person name="Hammon N."/>
            <person name="Israni S."/>
            <person name="Dalin E."/>
            <person name="Tice H."/>
            <person name="Pitluck S."/>
            <person name="Chain P."/>
            <person name="Malfatti S."/>
            <person name="Shin M."/>
            <person name="Vergez L."/>
            <person name="Schmutz J."/>
            <person name="Larimer F."/>
            <person name="Land M."/>
            <person name="Hauser L."/>
            <person name="Kyrpides N."/>
            <person name="Lykidis A."/>
            <person name="Parales R."/>
            <person name="Richardson P."/>
        </authorList>
    </citation>
    <scope>NUCLEOTIDE SEQUENCE [LARGE SCALE GENOMIC DNA]</scope>
    <source>
        <strain>ATCC 700007 / DSM 6899 / JCM 31910 / BCRC 17059 / LMG 24140 / F1</strain>
    </source>
</reference>
<comment type="function">
    <text evidence="1">Catalyzes the synthesis of alpha-ribazole-5'-phosphate from nicotinate mononucleotide (NAMN) and 5,6-dimethylbenzimidazole (DMB).</text>
</comment>
<comment type="catalytic activity">
    <reaction evidence="1">
        <text>5,6-dimethylbenzimidazole + nicotinate beta-D-ribonucleotide = alpha-ribazole 5'-phosphate + nicotinate + H(+)</text>
        <dbReference type="Rhea" id="RHEA:11196"/>
        <dbReference type="ChEBI" id="CHEBI:15378"/>
        <dbReference type="ChEBI" id="CHEBI:15890"/>
        <dbReference type="ChEBI" id="CHEBI:32544"/>
        <dbReference type="ChEBI" id="CHEBI:57502"/>
        <dbReference type="ChEBI" id="CHEBI:57918"/>
        <dbReference type="EC" id="2.4.2.21"/>
    </reaction>
</comment>
<comment type="pathway">
    <text evidence="1">Nucleoside biosynthesis; alpha-ribazole biosynthesis; alpha-ribazole from 5,6-dimethylbenzimidazole: step 1/2.</text>
</comment>
<comment type="similarity">
    <text evidence="1">Belongs to the CobT family.</text>
</comment>
<accession>A5W7Q4</accession>
<gene>
    <name evidence="1" type="primary">cobT</name>
    <name type="ordered locus">Pput_4040</name>
</gene>
<dbReference type="EC" id="2.4.2.21" evidence="1"/>
<dbReference type="EMBL" id="CP000712">
    <property type="protein sequence ID" value="ABQ80164.1"/>
    <property type="molecule type" value="Genomic_DNA"/>
</dbReference>
<dbReference type="SMR" id="A5W7Q4"/>
<dbReference type="KEGG" id="ppf:Pput_4040"/>
<dbReference type="eggNOG" id="COG2038">
    <property type="taxonomic scope" value="Bacteria"/>
</dbReference>
<dbReference type="HOGENOM" id="CLU_002982_0_0_6"/>
<dbReference type="UniPathway" id="UPA00061">
    <property type="reaction ID" value="UER00516"/>
</dbReference>
<dbReference type="GO" id="GO:0008939">
    <property type="term" value="F:nicotinate-nucleotide-dimethylbenzimidazole phosphoribosyltransferase activity"/>
    <property type="evidence" value="ECO:0007669"/>
    <property type="project" value="UniProtKB-UniRule"/>
</dbReference>
<dbReference type="GO" id="GO:0009236">
    <property type="term" value="P:cobalamin biosynthetic process"/>
    <property type="evidence" value="ECO:0007669"/>
    <property type="project" value="UniProtKB-KW"/>
</dbReference>
<dbReference type="CDD" id="cd02439">
    <property type="entry name" value="DMB-PRT_CobT"/>
    <property type="match status" value="1"/>
</dbReference>
<dbReference type="FunFam" id="3.40.50.10210:FF:000001">
    <property type="entry name" value="Nicotinate-nucleotide--dimethylbenzimidazole phosphoribosyltransferase"/>
    <property type="match status" value="1"/>
</dbReference>
<dbReference type="Gene3D" id="1.10.1610.10">
    <property type="match status" value="1"/>
</dbReference>
<dbReference type="Gene3D" id="3.40.50.10210">
    <property type="match status" value="1"/>
</dbReference>
<dbReference type="HAMAP" id="MF_00230">
    <property type="entry name" value="CobT"/>
    <property type="match status" value="1"/>
</dbReference>
<dbReference type="InterPro" id="IPR003200">
    <property type="entry name" value="Nict_dMeBzImd_PRibTrfase"/>
</dbReference>
<dbReference type="InterPro" id="IPR017846">
    <property type="entry name" value="Nict_dMeBzImd_PRibTrfase_bact"/>
</dbReference>
<dbReference type="InterPro" id="IPR023195">
    <property type="entry name" value="Nict_dMeBzImd_PRibTrfase_N"/>
</dbReference>
<dbReference type="InterPro" id="IPR036087">
    <property type="entry name" value="Nict_dMeBzImd_PRibTrfase_sf"/>
</dbReference>
<dbReference type="NCBIfam" id="TIGR03160">
    <property type="entry name" value="cobT_DBIPRT"/>
    <property type="match status" value="1"/>
</dbReference>
<dbReference type="NCBIfam" id="NF000996">
    <property type="entry name" value="PRK00105.1"/>
    <property type="match status" value="1"/>
</dbReference>
<dbReference type="PANTHER" id="PTHR43463">
    <property type="entry name" value="NICOTINATE-NUCLEOTIDE--DIMETHYLBENZIMIDAZOLE PHOSPHORIBOSYLTRANSFERASE"/>
    <property type="match status" value="1"/>
</dbReference>
<dbReference type="PANTHER" id="PTHR43463:SF1">
    <property type="entry name" value="NICOTINATE-NUCLEOTIDE--DIMETHYLBENZIMIDAZOLE PHOSPHORIBOSYLTRANSFERASE"/>
    <property type="match status" value="1"/>
</dbReference>
<dbReference type="Pfam" id="PF02277">
    <property type="entry name" value="DBI_PRT"/>
    <property type="match status" value="1"/>
</dbReference>
<dbReference type="SUPFAM" id="SSF52733">
    <property type="entry name" value="Nicotinate mononucleotide:5,6-dimethylbenzimidazole phosphoribosyltransferase (CobT)"/>
    <property type="match status" value="1"/>
</dbReference>
<name>COBT_PSEP1</name>
<sequence length="351" mass="36012">MTQAWWRDACQPLDNAAMDQARARQQQLTKPAGSLGQLEALAIQLAGLQGLERPTLDQVAITIFAGDHGVVEEGISAYPQAVTGQMLCNFVGGGAAISVLARQLQASLDVVDLGTIDAQLELPGVRHLRLGTGTANFARQPAMTENQLQAALQAGRDSAQRGAEQGAQLFIGGEMGIGNTTAAAALASVLLGCPASELSGPGTGLDNAGVQHKAEVIERALRLHGLRAEDPLQVLGCVGGFEIAALVGAYIGCAQAGVAVLVDGFICSVAALVAVRLNPQCRAWLLFAHQGAEPGHKTLLAALQAEPLLALGLRLGEGSGAALAVPLLRLACALHGQMATFAEAAVADRPA</sequence>
<proteinExistence type="inferred from homology"/>
<feature type="chain" id="PRO_1000021617" description="Nicotinate-nucleotide--dimethylbenzimidazole phosphoribosyltransferase">
    <location>
        <begin position="1"/>
        <end position="351"/>
    </location>
</feature>
<feature type="active site" description="Proton acceptor" evidence="1">
    <location>
        <position position="317"/>
    </location>
</feature>
<keyword id="KW-0169">Cobalamin biosynthesis</keyword>
<keyword id="KW-0328">Glycosyltransferase</keyword>
<keyword id="KW-0808">Transferase</keyword>
<evidence type="ECO:0000255" key="1">
    <source>
        <dbReference type="HAMAP-Rule" id="MF_00230"/>
    </source>
</evidence>
<organism>
    <name type="scientific">Pseudomonas putida (strain ATCC 700007 / DSM 6899 / JCM 31910 / BCRC 17059 / LMG 24140 / F1)</name>
    <dbReference type="NCBI Taxonomy" id="351746"/>
    <lineage>
        <taxon>Bacteria</taxon>
        <taxon>Pseudomonadati</taxon>
        <taxon>Pseudomonadota</taxon>
        <taxon>Gammaproteobacteria</taxon>
        <taxon>Pseudomonadales</taxon>
        <taxon>Pseudomonadaceae</taxon>
        <taxon>Pseudomonas</taxon>
    </lineage>
</organism>